<accession>O67122</accession>
<reference key="1">
    <citation type="journal article" date="1998" name="Nature">
        <title>The complete genome of the hyperthermophilic bacterium Aquifex aeolicus.</title>
        <authorList>
            <person name="Deckert G."/>
            <person name="Warren P.V."/>
            <person name="Gaasterland T."/>
            <person name="Young W.G."/>
            <person name="Lenox A.L."/>
            <person name="Graham D.E."/>
            <person name="Overbeek R."/>
            <person name="Snead M.A."/>
            <person name="Keller M."/>
            <person name="Aujay M."/>
            <person name="Huber R."/>
            <person name="Feldman R.A."/>
            <person name="Short J.M."/>
            <person name="Olsen G.J."/>
            <person name="Swanson R.V."/>
        </authorList>
    </citation>
    <scope>NUCLEOTIDE SEQUENCE [LARGE SCALE GENOMIC DNA]</scope>
    <source>
        <strain>VF5</strain>
    </source>
</reference>
<feature type="chain" id="PRO_0000189569" description="Motility protein A">
    <location>
        <begin position="1"/>
        <end position="254"/>
    </location>
</feature>
<feature type="transmembrane region" description="Helical" evidence="2">
    <location>
        <begin position="6"/>
        <end position="26"/>
    </location>
</feature>
<feature type="transmembrane region" description="Helical" evidence="2">
    <location>
        <begin position="32"/>
        <end position="52"/>
    </location>
</feature>
<feature type="transmembrane region" description="Helical" evidence="2">
    <location>
        <begin position="150"/>
        <end position="170"/>
    </location>
</feature>
<feature type="transmembrane region" description="Helical" evidence="2">
    <location>
        <begin position="184"/>
        <end position="204"/>
    </location>
</feature>
<feature type="topological domain" description="Cytoplasmic" evidence="2">
    <location>
        <begin position="205"/>
        <end position="254"/>
    </location>
</feature>
<feature type="turn" evidence="4">
    <location>
        <begin position="3"/>
        <end position="5"/>
    </location>
</feature>
<feature type="helix" evidence="4">
    <location>
        <begin position="6"/>
        <end position="13"/>
    </location>
</feature>
<feature type="turn" evidence="4">
    <location>
        <begin position="14"/>
        <end position="17"/>
    </location>
</feature>
<feature type="helix" evidence="4">
    <location>
        <begin position="18"/>
        <end position="21"/>
    </location>
</feature>
<feature type="strand" evidence="4">
    <location>
        <begin position="26"/>
        <end position="29"/>
    </location>
</feature>
<feature type="helix" evidence="4">
    <location>
        <begin position="32"/>
        <end position="34"/>
    </location>
</feature>
<feature type="turn" evidence="4">
    <location>
        <begin position="35"/>
        <end position="38"/>
    </location>
</feature>
<feature type="helix" evidence="4">
    <location>
        <begin position="39"/>
        <end position="44"/>
    </location>
</feature>
<feature type="turn" evidence="4">
    <location>
        <begin position="45"/>
        <end position="49"/>
    </location>
</feature>
<feature type="helix" evidence="4">
    <location>
        <begin position="52"/>
        <end position="59"/>
    </location>
</feature>
<feature type="helix" evidence="4">
    <location>
        <begin position="62"/>
        <end position="64"/>
    </location>
</feature>
<feature type="turn" evidence="4">
    <location>
        <begin position="65"/>
        <end position="67"/>
    </location>
</feature>
<feature type="helix" evidence="4">
    <location>
        <begin position="73"/>
        <end position="76"/>
    </location>
</feature>
<feature type="helix" evidence="4">
    <location>
        <begin position="78"/>
        <end position="89"/>
    </location>
</feature>
<feature type="helix" evidence="4">
    <location>
        <begin position="99"/>
        <end position="103"/>
    </location>
</feature>
<feature type="helix" evidence="4">
    <location>
        <begin position="107"/>
        <end position="118"/>
    </location>
</feature>
<feature type="helix" evidence="4">
    <location>
        <begin position="122"/>
        <end position="124"/>
    </location>
</feature>
<feature type="turn" evidence="4">
    <location>
        <begin position="125"/>
        <end position="128"/>
    </location>
</feature>
<feature type="helix" evidence="4">
    <location>
        <begin position="129"/>
        <end position="133"/>
    </location>
</feature>
<feature type="turn" evidence="4">
    <location>
        <begin position="134"/>
        <end position="136"/>
    </location>
</feature>
<feature type="turn" evidence="4">
    <location>
        <begin position="138"/>
        <end position="140"/>
    </location>
</feature>
<feature type="helix" evidence="4">
    <location>
        <begin position="141"/>
        <end position="147"/>
    </location>
</feature>
<feature type="helix" evidence="4">
    <location>
        <begin position="150"/>
        <end position="153"/>
    </location>
</feature>
<feature type="turn" evidence="4">
    <location>
        <begin position="154"/>
        <end position="157"/>
    </location>
</feature>
<feature type="helix" evidence="4">
    <location>
        <begin position="158"/>
        <end position="172"/>
    </location>
</feature>
<feature type="helix" evidence="4">
    <location>
        <begin position="176"/>
        <end position="178"/>
    </location>
</feature>
<feature type="helix" evidence="4">
    <location>
        <begin position="180"/>
        <end position="199"/>
    </location>
</feature>
<feature type="helix" evidence="4">
    <location>
        <begin position="201"/>
        <end position="210"/>
    </location>
</feature>
<feature type="helix" evidence="4">
    <location>
        <begin position="212"/>
        <end position="230"/>
    </location>
</feature>
<feature type="helix" evidence="4">
    <location>
        <begin position="235"/>
        <end position="246"/>
    </location>
</feature>
<proteinExistence type="evidence at protein level"/>
<evidence type="ECO:0000250" key="1"/>
<evidence type="ECO:0000255" key="2"/>
<evidence type="ECO:0000305" key="3"/>
<evidence type="ECO:0007829" key="4">
    <source>
        <dbReference type="PDB" id="8GQY"/>
    </source>
</evidence>
<sequence length="254" mass="27263">MDVGTIIGIIAAFLLILISILIGGSITAFINVPSIFIVVGGGMAAAMGAFPLKDFIRGVLAIKKAFLWKPPDLNDVIETIGEIASKVRKEGILALEGDIELYYQKDPLLGDMIRMLVDGIDINDIKATAEMALAQLDEKMSTEVAVWEKLADLFPAFGMIGTLIGLIQMLRNLNDPSALGPGMAVALITTLYGAILANAFAIPVANKLKKAKDMEVLVKTIYIEAIEKIQKGENPNVVKQEAAIMLGVELPEEV</sequence>
<keyword id="KW-0002">3D-structure</keyword>
<keyword id="KW-1003">Cell membrane</keyword>
<keyword id="KW-0145">Chemotaxis</keyword>
<keyword id="KW-0283">Flagellar rotation</keyword>
<keyword id="KW-0375">Hydrogen ion transport</keyword>
<keyword id="KW-0406">Ion transport</keyword>
<keyword id="KW-0472">Membrane</keyword>
<keyword id="KW-1185">Reference proteome</keyword>
<keyword id="KW-0812">Transmembrane</keyword>
<keyword id="KW-1133">Transmembrane helix</keyword>
<keyword id="KW-0813">Transport</keyword>
<dbReference type="EMBL" id="AE000657">
    <property type="protein sequence ID" value="AAC07083.1"/>
    <property type="molecule type" value="Genomic_DNA"/>
</dbReference>
<dbReference type="PIR" id="G70386">
    <property type="entry name" value="G70386"/>
</dbReference>
<dbReference type="RefSeq" id="NP_213685.1">
    <property type="nucleotide sequence ID" value="NC_000918.1"/>
</dbReference>
<dbReference type="RefSeq" id="WP_010880623.1">
    <property type="nucleotide sequence ID" value="NC_000918.1"/>
</dbReference>
<dbReference type="PDB" id="8GQY">
    <property type="method" value="EM"/>
    <property type="resolution" value="3.40 A"/>
    <property type="chains" value="A/B/C/D/E=1-254"/>
</dbReference>
<dbReference type="PDBsum" id="8GQY"/>
<dbReference type="EMDB" id="EMD-3417"/>
<dbReference type="EMDB" id="EMD-34203"/>
<dbReference type="SMR" id="O67122"/>
<dbReference type="FunCoup" id="O67122">
    <property type="interactions" value="210"/>
</dbReference>
<dbReference type="STRING" id="224324.aq_1003"/>
<dbReference type="EnsemblBacteria" id="AAC07083">
    <property type="protein sequence ID" value="AAC07083"/>
    <property type="gene ID" value="aq_1003"/>
</dbReference>
<dbReference type="KEGG" id="aae:aq_1003"/>
<dbReference type="PATRIC" id="fig|224324.8.peg.785"/>
<dbReference type="eggNOG" id="COG1291">
    <property type="taxonomic scope" value="Bacteria"/>
</dbReference>
<dbReference type="HOGENOM" id="CLU_079895_1_0_0"/>
<dbReference type="InParanoid" id="O67122"/>
<dbReference type="OrthoDB" id="9806929at2"/>
<dbReference type="Proteomes" id="UP000000798">
    <property type="component" value="Chromosome"/>
</dbReference>
<dbReference type="GO" id="GO:0005886">
    <property type="term" value="C:plasma membrane"/>
    <property type="evidence" value="ECO:0000318"/>
    <property type="project" value="GO_Central"/>
</dbReference>
<dbReference type="GO" id="GO:0071978">
    <property type="term" value="P:bacterial-type flagellum-dependent swarming motility"/>
    <property type="evidence" value="ECO:0000318"/>
    <property type="project" value="GO_Central"/>
</dbReference>
<dbReference type="GO" id="GO:0006935">
    <property type="term" value="P:chemotaxis"/>
    <property type="evidence" value="ECO:0007669"/>
    <property type="project" value="UniProtKB-KW"/>
</dbReference>
<dbReference type="GO" id="GO:1902600">
    <property type="term" value="P:proton transmembrane transport"/>
    <property type="evidence" value="ECO:0007669"/>
    <property type="project" value="UniProtKB-KW"/>
</dbReference>
<dbReference type="InterPro" id="IPR000540">
    <property type="entry name" value="Flag_MotA_CS"/>
</dbReference>
<dbReference type="InterPro" id="IPR047055">
    <property type="entry name" value="MotA-like"/>
</dbReference>
<dbReference type="InterPro" id="IPR002898">
    <property type="entry name" value="MotA_ExbB_proton_chnl"/>
</dbReference>
<dbReference type="PANTHER" id="PTHR30433">
    <property type="entry name" value="CHEMOTAXIS PROTEIN MOTA"/>
    <property type="match status" value="1"/>
</dbReference>
<dbReference type="PANTHER" id="PTHR30433:SF2">
    <property type="entry name" value="MOTILITY PROTEIN A"/>
    <property type="match status" value="1"/>
</dbReference>
<dbReference type="Pfam" id="PF01618">
    <property type="entry name" value="MotA_ExbB"/>
    <property type="match status" value="1"/>
</dbReference>
<dbReference type="PROSITE" id="PS01307">
    <property type="entry name" value="MOTA"/>
    <property type="match status" value="1"/>
</dbReference>
<comment type="function">
    <text evidence="1">MotA and MotB comprise the stator element of the flagellar motor complex. Required for rotation of the flagellar motor. Probable transmembrane proton channel (By similarity).</text>
</comment>
<comment type="subunit">
    <text evidence="1">Each stator complex is composed of 4 MotA and 2 MotB subunits. 2 A subunits and 1 B subunit are thought to form a single ion channel, so that each stator complex contains two channels (By similarity).</text>
</comment>
<comment type="subcellular location">
    <subcellularLocation>
        <location evidence="1">Cell membrane</location>
        <topology evidence="3">Multi-pass membrane protein</topology>
    </subcellularLocation>
</comment>
<comment type="similarity">
    <text evidence="3">Belongs to the MotA family.</text>
</comment>
<name>MOTA_AQUAE</name>
<protein>
    <recommendedName>
        <fullName>Motility protein A</fullName>
    </recommendedName>
    <alternativeName>
        <fullName>Chemotaxis protein MotA</fullName>
    </alternativeName>
</protein>
<organism>
    <name type="scientific">Aquifex aeolicus (strain VF5)</name>
    <dbReference type="NCBI Taxonomy" id="224324"/>
    <lineage>
        <taxon>Bacteria</taxon>
        <taxon>Pseudomonadati</taxon>
        <taxon>Aquificota</taxon>
        <taxon>Aquificia</taxon>
        <taxon>Aquificales</taxon>
        <taxon>Aquificaceae</taxon>
        <taxon>Aquifex</taxon>
    </lineage>
</organism>
<gene>
    <name type="primary">motA</name>
    <name type="ordered locus">aq_1003</name>
</gene>